<evidence type="ECO:0000255" key="1">
    <source>
        <dbReference type="HAMAP-Rule" id="MF_01367"/>
    </source>
</evidence>
<evidence type="ECO:0000305" key="2"/>
<gene>
    <name evidence="1" type="primary">rplN</name>
    <name type="ordered locus">PSEEN0500</name>
</gene>
<comment type="function">
    <text evidence="1">Binds to 23S rRNA. Forms part of two intersubunit bridges in the 70S ribosome.</text>
</comment>
<comment type="subunit">
    <text evidence="1">Part of the 50S ribosomal subunit. Forms a cluster with proteins L3 and L19. In the 70S ribosome, L14 and L19 interact and together make contacts with the 16S rRNA in bridges B5 and B8.</text>
</comment>
<comment type="similarity">
    <text evidence="1">Belongs to the universal ribosomal protein uL14 family.</text>
</comment>
<proteinExistence type="inferred from homology"/>
<keyword id="KW-0687">Ribonucleoprotein</keyword>
<keyword id="KW-0689">Ribosomal protein</keyword>
<keyword id="KW-0694">RNA-binding</keyword>
<keyword id="KW-0699">rRNA-binding</keyword>
<dbReference type="EMBL" id="CT573326">
    <property type="protein sequence ID" value="CAK13446.1"/>
    <property type="molecule type" value="Genomic_DNA"/>
</dbReference>
<dbReference type="RefSeq" id="WP_008089810.1">
    <property type="nucleotide sequence ID" value="NC_008027.1"/>
</dbReference>
<dbReference type="SMR" id="Q1IFV6"/>
<dbReference type="STRING" id="384676.PSEEN0500"/>
<dbReference type="GeneID" id="93675532"/>
<dbReference type="KEGG" id="pen:PSEEN0500"/>
<dbReference type="eggNOG" id="COG0093">
    <property type="taxonomic scope" value="Bacteria"/>
</dbReference>
<dbReference type="HOGENOM" id="CLU_095071_2_1_6"/>
<dbReference type="OrthoDB" id="9806379at2"/>
<dbReference type="Proteomes" id="UP000000658">
    <property type="component" value="Chromosome"/>
</dbReference>
<dbReference type="GO" id="GO:0022625">
    <property type="term" value="C:cytosolic large ribosomal subunit"/>
    <property type="evidence" value="ECO:0007669"/>
    <property type="project" value="TreeGrafter"/>
</dbReference>
<dbReference type="GO" id="GO:0070180">
    <property type="term" value="F:large ribosomal subunit rRNA binding"/>
    <property type="evidence" value="ECO:0007669"/>
    <property type="project" value="TreeGrafter"/>
</dbReference>
<dbReference type="GO" id="GO:0003735">
    <property type="term" value="F:structural constituent of ribosome"/>
    <property type="evidence" value="ECO:0007669"/>
    <property type="project" value="InterPro"/>
</dbReference>
<dbReference type="GO" id="GO:0006412">
    <property type="term" value="P:translation"/>
    <property type="evidence" value="ECO:0007669"/>
    <property type="project" value="UniProtKB-UniRule"/>
</dbReference>
<dbReference type="CDD" id="cd00337">
    <property type="entry name" value="Ribosomal_uL14"/>
    <property type="match status" value="1"/>
</dbReference>
<dbReference type="FunFam" id="2.40.150.20:FF:000001">
    <property type="entry name" value="50S ribosomal protein L14"/>
    <property type="match status" value="1"/>
</dbReference>
<dbReference type="Gene3D" id="2.40.150.20">
    <property type="entry name" value="Ribosomal protein L14"/>
    <property type="match status" value="1"/>
</dbReference>
<dbReference type="HAMAP" id="MF_01367">
    <property type="entry name" value="Ribosomal_uL14"/>
    <property type="match status" value="1"/>
</dbReference>
<dbReference type="InterPro" id="IPR000218">
    <property type="entry name" value="Ribosomal_uL14"/>
</dbReference>
<dbReference type="InterPro" id="IPR005745">
    <property type="entry name" value="Ribosomal_uL14_bac-type"/>
</dbReference>
<dbReference type="InterPro" id="IPR019972">
    <property type="entry name" value="Ribosomal_uL14_CS"/>
</dbReference>
<dbReference type="InterPro" id="IPR036853">
    <property type="entry name" value="Ribosomal_uL14_sf"/>
</dbReference>
<dbReference type="NCBIfam" id="TIGR01067">
    <property type="entry name" value="rplN_bact"/>
    <property type="match status" value="1"/>
</dbReference>
<dbReference type="PANTHER" id="PTHR11761">
    <property type="entry name" value="50S/60S RIBOSOMAL PROTEIN L14/L23"/>
    <property type="match status" value="1"/>
</dbReference>
<dbReference type="PANTHER" id="PTHR11761:SF3">
    <property type="entry name" value="LARGE RIBOSOMAL SUBUNIT PROTEIN UL14M"/>
    <property type="match status" value="1"/>
</dbReference>
<dbReference type="Pfam" id="PF00238">
    <property type="entry name" value="Ribosomal_L14"/>
    <property type="match status" value="1"/>
</dbReference>
<dbReference type="SMART" id="SM01374">
    <property type="entry name" value="Ribosomal_L14"/>
    <property type="match status" value="1"/>
</dbReference>
<dbReference type="SUPFAM" id="SSF50193">
    <property type="entry name" value="Ribosomal protein L14"/>
    <property type="match status" value="1"/>
</dbReference>
<dbReference type="PROSITE" id="PS00049">
    <property type="entry name" value="RIBOSOMAL_L14"/>
    <property type="match status" value="1"/>
</dbReference>
<protein>
    <recommendedName>
        <fullName evidence="1">Large ribosomal subunit protein uL14</fullName>
    </recommendedName>
    <alternativeName>
        <fullName evidence="2">50S ribosomal protein L14</fullName>
    </alternativeName>
</protein>
<sequence>MIQTQSMLDVADNSGARRVMCIKVLGGSHRRYAGIGDIIKVTVKEAIPRGKVKKGQVMTAVVVRTRHGVRRADGSIIRFDGNAAVLLNTKQEPIGTRIFGPVTRELRTEKFMKIVSLAPEVL</sequence>
<accession>Q1IFV6</accession>
<organism>
    <name type="scientific">Pseudomonas entomophila (strain L48)</name>
    <dbReference type="NCBI Taxonomy" id="384676"/>
    <lineage>
        <taxon>Bacteria</taxon>
        <taxon>Pseudomonadati</taxon>
        <taxon>Pseudomonadota</taxon>
        <taxon>Gammaproteobacteria</taxon>
        <taxon>Pseudomonadales</taxon>
        <taxon>Pseudomonadaceae</taxon>
        <taxon>Pseudomonas</taxon>
    </lineage>
</organism>
<feature type="chain" id="PRO_1000055677" description="Large ribosomal subunit protein uL14">
    <location>
        <begin position="1"/>
        <end position="122"/>
    </location>
</feature>
<reference key="1">
    <citation type="journal article" date="2006" name="Nat. Biotechnol.">
        <title>Complete genome sequence of the entomopathogenic and metabolically versatile soil bacterium Pseudomonas entomophila.</title>
        <authorList>
            <person name="Vodovar N."/>
            <person name="Vallenet D."/>
            <person name="Cruveiller S."/>
            <person name="Rouy Z."/>
            <person name="Barbe V."/>
            <person name="Acosta C."/>
            <person name="Cattolico L."/>
            <person name="Jubin C."/>
            <person name="Lajus A."/>
            <person name="Segurens B."/>
            <person name="Vacherie B."/>
            <person name="Wincker P."/>
            <person name="Weissenbach J."/>
            <person name="Lemaitre B."/>
            <person name="Medigue C."/>
            <person name="Boccard F."/>
        </authorList>
    </citation>
    <scope>NUCLEOTIDE SEQUENCE [LARGE SCALE GENOMIC DNA]</scope>
    <source>
        <strain>L48</strain>
    </source>
</reference>
<name>RL14_PSEE4</name>